<name>GLK_YERPN</name>
<gene>
    <name evidence="1" type="primary">glk</name>
    <name type="ordered locus">YPN_1405</name>
    <name type="ORF">YP516_1560</name>
</gene>
<organism>
    <name type="scientific">Yersinia pestis bv. Antiqua (strain Nepal516)</name>
    <dbReference type="NCBI Taxonomy" id="377628"/>
    <lineage>
        <taxon>Bacteria</taxon>
        <taxon>Pseudomonadati</taxon>
        <taxon>Pseudomonadota</taxon>
        <taxon>Gammaproteobacteria</taxon>
        <taxon>Enterobacterales</taxon>
        <taxon>Yersiniaceae</taxon>
        <taxon>Yersinia</taxon>
    </lineage>
</organism>
<feature type="chain" id="PRO_0000268795" description="Glucokinase">
    <location>
        <begin position="1"/>
        <end position="323"/>
    </location>
</feature>
<feature type="binding site" evidence="1">
    <location>
        <begin position="8"/>
        <end position="13"/>
    </location>
    <ligand>
        <name>ATP</name>
        <dbReference type="ChEBI" id="CHEBI:30616"/>
    </ligand>
</feature>
<sequence>MTTYALVGDVGGTNARLALCAVATGEILQAKTYSGLEYESLEDVIKQYLSEHQAKVTDACIAIACPITGDWVAMTNHTWAFSIAAMQQNLGLDHLEVINDFTAVSMAIPVLPAQDVLQFGGTQPQPGKPVAVYGAGTGLGVAHLVNVDRRWISLAGEGGHVDFAPNSEEEDQILAVLRQELGHVSAERVLSGPGLVNLYRAIVISDARLPEKLAPKDITARALADSCTDCRRALSLFCVIMGRFGGNLALNLSTFGGVYIAGGIVPRFMEFFKASGFRAAFEDKGRFKDFLQDIPVYMITHPQPGLLGAGAYLRQKLGYELSS</sequence>
<comment type="catalytic activity">
    <reaction evidence="1">
        <text>D-glucose + ATP = D-glucose 6-phosphate + ADP + H(+)</text>
        <dbReference type="Rhea" id="RHEA:17825"/>
        <dbReference type="ChEBI" id="CHEBI:4167"/>
        <dbReference type="ChEBI" id="CHEBI:15378"/>
        <dbReference type="ChEBI" id="CHEBI:30616"/>
        <dbReference type="ChEBI" id="CHEBI:61548"/>
        <dbReference type="ChEBI" id="CHEBI:456216"/>
        <dbReference type="EC" id="2.7.1.2"/>
    </reaction>
</comment>
<comment type="subcellular location">
    <subcellularLocation>
        <location evidence="1">Cytoplasm</location>
    </subcellularLocation>
</comment>
<comment type="similarity">
    <text evidence="1">Belongs to the bacterial glucokinase family.</text>
</comment>
<protein>
    <recommendedName>
        <fullName evidence="1">Glucokinase</fullName>
        <ecNumber evidence="1">2.7.1.2</ecNumber>
    </recommendedName>
    <alternativeName>
        <fullName evidence="1">Glucose kinase</fullName>
    </alternativeName>
</protein>
<evidence type="ECO:0000255" key="1">
    <source>
        <dbReference type="HAMAP-Rule" id="MF_00524"/>
    </source>
</evidence>
<reference key="1">
    <citation type="journal article" date="2006" name="J. Bacteriol.">
        <title>Complete genome sequence of Yersinia pestis strains Antiqua and Nepal516: evidence of gene reduction in an emerging pathogen.</title>
        <authorList>
            <person name="Chain P.S.G."/>
            <person name="Hu P."/>
            <person name="Malfatti S.A."/>
            <person name="Radnedge L."/>
            <person name="Larimer F."/>
            <person name="Vergez L.M."/>
            <person name="Worsham P."/>
            <person name="Chu M.C."/>
            <person name="Andersen G.L."/>
        </authorList>
    </citation>
    <scope>NUCLEOTIDE SEQUENCE [LARGE SCALE GENOMIC DNA]</scope>
    <source>
        <strain>Nepal516</strain>
    </source>
</reference>
<reference key="2">
    <citation type="submission" date="2009-04" db="EMBL/GenBank/DDBJ databases">
        <title>Yersinia pestis Nepal516A whole genome shotgun sequencing project.</title>
        <authorList>
            <person name="Plunkett G. III"/>
            <person name="Anderson B.D."/>
            <person name="Baumler D.J."/>
            <person name="Burland V."/>
            <person name="Cabot E.L."/>
            <person name="Glasner J.D."/>
            <person name="Mau B."/>
            <person name="Neeno-Eckwall E."/>
            <person name="Perna N.T."/>
            <person name="Munk A.C."/>
            <person name="Tapia R."/>
            <person name="Green L.D."/>
            <person name="Rogers Y.C."/>
            <person name="Detter J.C."/>
            <person name="Bruce D.C."/>
            <person name="Brettin T.S."/>
        </authorList>
    </citation>
    <scope>NUCLEOTIDE SEQUENCE [LARGE SCALE GENOMIC DNA]</scope>
    <source>
        <strain>Nepal516</strain>
    </source>
</reference>
<dbReference type="EC" id="2.7.1.2" evidence="1"/>
<dbReference type="EMBL" id="CP000305">
    <property type="protein sequence ID" value="ABG17735.1"/>
    <property type="molecule type" value="Genomic_DNA"/>
</dbReference>
<dbReference type="EMBL" id="ACNQ01000009">
    <property type="protein sequence ID" value="EEO76833.1"/>
    <property type="molecule type" value="Genomic_DNA"/>
</dbReference>
<dbReference type="RefSeq" id="WP_002211615.1">
    <property type="nucleotide sequence ID" value="NZ_ACNQ01000009.1"/>
</dbReference>
<dbReference type="SMR" id="Q1CJU5"/>
<dbReference type="GeneID" id="57975727"/>
<dbReference type="KEGG" id="ypn:YPN_1405"/>
<dbReference type="HOGENOM" id="CLU_042582_1_0_6"/>
<dbReference type="Proteomes" id="UP000008936">
    <property type="component" value="Chromosome"/>
</dbReference>
<dbReference type="GO" id="GO:0005829">
    <property type="term" value="C:cytosol"/>
    <property type="evidence" value="ECO:0007669"/>
    <property type="project" value="TreeGrafter"/>
</dbReference>
<dbReference type="GO" id="GO:0005524">
    <property type="term" value="F:ATP binding"/>
    <property type="evidence" value="ECO:0007669"/>
    <property type="project" value="UniProtKB-UniRule"/>
</dbReference>
<dbReference type="GO" id="GO:0005536">
    <property type="term" value="F:D-glucose binding"/>
    <property type="evidence" value="ECO:0007669"/>
    <property type="project" value="InterPro"/>
</dbReference>
<dbReference type="GO" id="GO:0004340">
    <property type="term" value="F:glucokinase activity"/>
    <property type="evidence" value="ECO:0007669"/>
    <property type="project" value="UniProtKB-UniRule"/>
</dbReference>
<dbReference type="GO" id="GO:0006096">
    <property type="term" value="P:glycolytic process"/>
    <property type="evidence" value="ECO:0007669"/>
    <property type="project" value="UniProtKB-UniRule"/>
</dbReference>
<dbReference type="CDD" id="cd24008">
    <property type="entry name" value="ASKHA_NBD_GLK"/>
    <property type="match status" value="1"/>
</dbReference>
<dbReference type="FunFam" id="3.30.420.40:FF:000045">
    <property type="entry name" value="Glucokinase"/>
    <property type="match status" value="1"/>
</dbReference>
<dbReference type="FunFam" id="3.40.367.20:FF:000002">
    <property type="entry name" value="Glucokinase"/>
    <property type="match status" value="1"/>
</dbReference>
<dbReference type="Gene3D" id="3.30.420.40">
    <property type="match status" value="1"/>
</dbReference>
<dbReference type="Gene3D" id="3.40.367.20">
    <property type="match status" value="1"/>
</dbReference>
<dbReference type="HAMAP" id="MF_00524">
    <property type="entry name" value="Glucokinase"/>
    <property type="match status" value="1"/>
</dbReference>
<dbReference type="InterPro" id="IPR043129">
    <property type="entry name" value="ATPase_NBD"/>
</dbReference>
<dbReference type="InterPro" id="IPR050201">
    <property type="entry name" value="Bacterial_glucokinase"/>
</dbReference>
<dbReference type="InterPro" id="IPR003836">
    <property type="entry name" value="Glucokinase"/>
</dbReference>
<dbReference type="NCBIfam" id="TIGR00749">
    <property type="entry name" value="glk"/>
    <property type="match status" value="1"/>
</dbReference>
<dbReference type="NCBIfam" id="NF001414">
    <property type="entry name" value="PRK00292.1-1"/>
    <property type="match status" value="1"/>
</dbReference>
<dbReference type="NCBIfam" id="NF001416">
    <property type="entry name" value="PRK00292.1-3"/>
    <property type="match status" value="1"/>
</dbReference>
<dbReference type="NCBIfam" id="NF009073">
    <property type="entry name" value="PRK12408.1"/>
    <property type="match status" value="1"/>
</dbReference>
<dbReference type="PANTHER" id="PTHR47690">
    <property type="entry name" value="GLUCOKINASE"/>
    <property type="match status" value="1"/>
</dbReference>
<dbReference type="PANTHER" id="PTHR47690:SF1">
    <property type="entry name" value="GLUCOKINASE"/>
    <property type="match status" value="1"/>
</dbReference>
<dbReference type="Pfam" id="PF02685">
    <property type="entry name" value="Glucokinase"/>
    <property type="match status" value="1"/>
</dbReference>
<dbReference type="SUPFAM" id="SSF53067">
    <property type="entry name" value="Actin-like ATPase domain"/>
    <property type="match status" value="1"/>
</dbReference>
<proteinExistence type="inferred from homology"/>
<accession>Q1CJU5</accession>
<accession>C4GS23</accession>
<keyword id="KW-0067">ATP-binding</keyword>
<keyword id="KW-0963">Cytoplasm</keyword>
<keyword id="KW-0324">Glycolysis</keyword>
<keyword id="KW-0418">Kinase</keyword>
<keyword id="KW-0547">Nucleotide-binding</keyword>
<keyword id="KW-0808">Transferase</keyword>